<evidence type="ECO:0000255" key="1">
    <source>
        <dbReference type="HAMAP-Rule" id="MF_01331"/>
    </source>
</evidence>
<evidence type="ECO:0000305" key="2"/>
<accession>A7GK25</accession>
<proteinExistence type="inferred from homology"/>
<keyword id="KW-0687">Ribonucleoprotein</keyword>
<keyword id="KW-0689">Ribosomal protein</keyword>
<keyword id="KW-0694">RNA-binding</keyword>
<keyword id="KW-0699">rRNA-binding</keyword>
<gene>
    <name evidence="1" type="primary">rplV</name>
    <name type="ordered locus">Bcer98_0109</name>
</gene>
<protein>
    <recommendedName>
        <fullName evidence="1">Large ribosomal subunit protein uL22</fullName>
    </recommendedName>
    <alternativeName>
        <fullName evidence="2">50S ribosomal protein L22</fullName>
    </alternativeName>
</protein>
<feature type="chain" id="PRO_1000086545" description="Large ribosomal subunit protein uL22">
    <location>
        <begin position="1"/>
        <end position="113"/>
    </location>
</feature>
<dbReference type="EMBL" id="CP000764">
    <property type="protein sequence ID" value="ABS20483.1"/>
    <property type="molecule type" value="Genomic_DNA"/>
</dbReference>
<dbReference type="RefSeq" id="WP_011983250.1">
    <property type="nucleotide sequence ID" value="NC_009674.1"/>
</dbReference>
<dbReference type="SMR" id="A7GK25"/>
<dbReference type="STRING" id="315749.Bcer98_0109"/>
<dbReference type="GeneID" id="33895430"/>
<dbReference type="KEGG" id="bcy:Bcer98_0109"/>
<dbReference type="eggNOG" id="COG0091">
    <property type="taxonomic scope" value="Bacteria"/>
</dbReference>
<dbReference type="HOGENOM" id="CLU_083987_3_3_9"/>
<dbReference type="OrthoDB" id="9805969at2"/>
<dbReference type="Proteomes" id="UP000002300">
    <property type="component" value="Chromosome"/>
</dbReference>
<dbReference type="GO" id="GO:0022625">
    <property type="term" value="C:cytosolic large ribosomal subunit"/>
    <property type="evidence" value="ECO:0007669"/>
    <property type="project" value="TreeGrafter"/>
</dbReference>
<dbReference type="GO" id="GO:0019843">
    <property type="term" value="F:rRNA binding"/>
    <property type="evidence" value="ECO:0007669"/>
    <property type="project" value="UniProtKB-UniRule"/>
</dbReference>
<dbReference type="GO" id="GO:0003735">
    <property type="term" value="F:structural constituent of ribosome"/>
    <property type="evidence" value="ECO:0007669"/>
    <property type="project" value="InterPro"/>
</dbReference>
<dbReference type="GO" id="GO:0006412">
    <property type="term" value="P:translation"/>
    <property type="evidence" value="ECO:0007669"/>
    <property type="project" value="UniProtKB-UniRule"/>
</dbReference>
<dbReference type="CDD" id="cd00336">
    <property type="entry name" value="Ribosomal_L22"/>
    <property type="match status" value="1"/>
</dbReference>
<dbReference type="FunFam" id="3.90.470.10:FF:000001">
    <property type="entry name" value="50S ribosomal protein L22"/>
    <property type="match status" value="1"/>
</dbReference>
<dbReference type="Gene3D" id="3.90.470.10">
    <property type="entry name" value="Ribosomal protein L22/L17"/>
    <property type="match status" value="1"/>
</dbReference>
<dbReference type="HAMAP" id="MF_01331_B">
    <property type="entry name" value="Ribosomal_uL22_B"/>
    <property type="match status" value="1"/>
</dbReference>
<dbReference type="InterPro" id="IPR001063">
    <property type="entry name" value="Ribosomal_uL22"/>
</dbReference>
<dbReference type="InterPro" id="IPR005727">
    <property type="entry name" value="Ribosomal_uL22_bac/chlpt-type"/>
</dbReference>
<dbReference type="InterPro" id="IPR047867">
    <property type="entry name" value="Ribosomal_uL22_bac/org-type"/>
</dbReference>
<dbReference type="InterPro" id="IPR018260">
    <property type="entry name" value="Ribosomal_uL22_CS"/>
</dbReference>
<dbReference type="InterPro" id="IPR036394">
    <property type="entry name" value="Ribosomal_uL22_sf"/>
</dbReference>
<dbReference type="NCBIfam" id="TIGR01044">
    <property type="entry name" value="rplV_bact"/>
    <property type="match status" value="1"/>
</dbReference>
<dbReference type="PANTHER" id="PTHR13501">
    <property type="entry name" value="CHLOROPLAST 50S RIBOSOMAL PROTEIN L22-RELATED"/>
    <property type="match status" value="1"/>
</dbReference>
<dbReference type="PANTHER" id="PTHR13501:SF8">
    <property type="entry name" value="LARGE RIBOSOMAL SUBUNIT PROTEIN UL22M"/>
    <property type="match status" value="1"/>
</dbReference>
<dbReference type="Pfam" id="PF00237">
    <property type="entry name" value="Ribosomal_L22"/>
    <property type="match status" value="1"/>
</dbReference>
<dbReference type="SUPFAM" id="SSF54843">
    <property type="entry name" value="Ribosomal protein L22"/>
    <property type="match status" value="1"/>
</dbReference>
<dbReference type="PROSITE" id="PS00464">
    <property type="entry name" value="RIBOSOMAL_L22"/>
    <property type="match status" value="1"/>
</dbReference>
<reference key="1">
    <citation type="journal article" date="2008" name="Chem. Biol. Interact.">
        <title>Extending the Bacillus cereus group genomics to putative food-borne pathogens of different toxicity.</title>
        <authorList>
            <person name="Lapidus A."/>
            <person name="Goltsman E."/>
            <person name="Auger S."/>
            <person name="Galleron N."/>
            <person name="Segurens B."/>
            <person name="Dossat C."/>
            <person name="Land M.L."/>
            <person name="Broussolle V."/>
            <person name="Brillard J."/>
            <person name="Guinebretiere M.-H."/>
            <person name="Sanchis V."/>
            <person name="Nguen-the C."/>
            <person name="Lereclus D."/>
            <person name="Richardson P."/>
            <person name="Wincker P."/>
            <person name="Weissenbach J."/>
            <person name="Ehrlich S.D."/>
            <person name="Sorokin A."/>
        </authorList>
    </citation>
    <scope>NUCLEOTIDE SEQUENCE [LARGE SCALE GENOMIC DNA]</scope>
    <source>
        <strain>DSM 22905 / CIP 110041 / 391-98 / NVH 391-98</strain>
    </source>
</reference>
<organism>
    <name type="scientific">Bacillus cytotoxicus (strain DSM 22905 / CIP 110041 / 391-98 / NVH 391-98)</name>
    <dbReference type="NCBI Taxonomy" id="315749"/>
    <lineage>
        <taxon>Bacteria</taxon>
        <taxon>Bacillati</taxon>
        <taxon>Bacillota</taxon>
        <taxon>Bacilli</taxon>
        <taxon>Bacillales</taxon>
        <taxon>Bacillaceae</taxon>
        <taxon>Bacillus</taxon>
        <taxon>Bacillus cereus group</taxon>
    </lineage>
</organism>
<comment type="function">
    <text evidence="1">This protein binds specifically to 23S rRNA; its binding is stimulated by other ribosomal proteins, e.g. L4, L17, and L20. It is important during the early stages of 50S assembly. It makes multiple contacts with different domains of the 23S rRNA in the assembled 50S subunit and ribosome (By similarity).</text>
</comment>
<comment type="function">
    <text evidence="1">The globular domain of the protein is located near the polypeptide exit tunnel on the outside of the subunit, while an extended beta-hairpin is found that lines the wall of the exit tunnel in the center of the 70S ribosome.</text>
</comment>
<comment type="subunit">
    <text evidence="1">Part of the 50S ribosomal subunit.</text>
</comment>
<comment type="similarity">
    <text evidence="1">Belongs to the universal ribosomal protein uL22 family.</text>
</comment>
<sequence length="113" mass="12522">MQAKAVARTVRIAPRKVRLVVDLIRGKQVGEAIAILNHTPKTASPVVEKVLKSAIANAEHNYEMDVNNLVVEKVFVDEGPTLKRFRPRAMGRASQINKRTSHITVVVSEKKEG</sequence>
<name>RL22_BACCN</name>